<evidence type="ECO:0000250" key="1">
    <source>
        <dbReference type="UniProtKB" id="A0PJK1"/>
    </source>
</evidence>
<evidence type="ECO:0000250" key="2">
    <source>
        <dbReference type="UniProtKB" id="Q5SWY8"/>
    </source>
</evidence>
<evidence type="ECO:0000255" key="3"/>
<evidence type="ECO:0000269" key="4">
    <source>
    </source>
</evidence>
<evidence type="ECO:0000305" key="5"/>
<comment type="function">
    <text evidence="1 2">Electrogenic Na+-coupled sugar symporter that actively transports D-mannose or D-fructose at the plasma membrane, with a Na+ to sugar coupling ratio of 1:1. Transporter activity is driven by a transmembrane Na+ electrochemical gradient set by the Na+/K+ pump. Exclusively recognizes sugar substrates having a pyranose ring with an axial hydroxyl group on carbon 2 (By similarity). Has likely evolved to enable renal reabsorption of D-mannose, an important constituent of oligosaccharide chains of glycoproteins. Contributes to dietary D-fructose reabsorption from glomerular filtrate across the brush border of the kidney (By similarity).</text>
</comment>
<comment type="catalytic activity">
    <reaction evidence="1 2">
        <text>D-mannose(out) + Na(+)(out) = D-mannose(in) + Na(+)(in)</text>
        <dbReference type="Rhea" id="RHEA:72907"/>
        <dbReference type="ChEBI" id="CHEBI:4208"/>
        <dbReference type="ChEBI" id="CHEBI:29101"/>
    </reaction>
    <physiologicalReaction direction="left-to-right" evidence="2">
        <dbReference type="Rhea" id="RHEA:72908"/>
    </physiologicalReaction>
</comment>
<comment type="catalytic activity">
    <reaction evidence="1 2">
        <text>D-fructopyranose(out) + Na(+)(out) = D-fructopyranose(in) + Na(+)(in)</text>
        <dbReference type="Rhea" id="RHEA:72915"/>
        <dbReference type="ChEBI" id="CHEBI:29101"/>
        <dbReference type="ChEBI" id="CHEBI:37714"/>
    </reaction>
    <physiologicalReaction direction="left-to-right" evidence="2">
        <dbReference type="Rhea" id="RHEA:72916"/>
    </physiologicalReaction>
</comment>
<comment type="subcellular location">
    <subcellularLocation>
        <location evidence="2">Apical cell membrane</location>
        <topology evidence="3">Multi-pass membrane protein</topology>
    </subcellularLocation>
</comment>
<comment type="tissue specificity">
    <text evidence="4">Expressed only in kidney.</text>
</comment>
<comment type="similarity">
    <text evidence="5">Belongs to the sodium:solute symporter (SSF) (TC 2.A.21) family.</text>
</comment>
<feature type="chain" id="PRO_0000311214" description="Sodium/mannose cotransporter SLC5A10">
    <location>
        <begin position="1"/>
        <end position="597"/>
    </location>
</feature>
<feature type="topological domain" description="Extracellular" evidence="3">
    <location>
        <begin position="1"/>
        <end position="16"/>
    </location>
</feature>
<feature type="transmembrane region" description="Helical" evidence="3">
    <location>
        <begin position="17"/>
        <end position="37"/>
    </location>
</feature>
<feature type="topological domain" description="Cytoplasmic" evidence="3">
    <location>
        <begin position="38"/>
        <end position="73"/>
    </location>
</feature>
<feature type="transmembrane region" description="Helical" evidence="3">
    <location>
        <begin position="74"/>
        <end position="94"/>
    </location>
</feature>
<feature type="topological domain" description="Extracellular" evidence="3">
    <location>
        <begin position="95"/>
        <end position="100"/>
    </location>
</feature>
<feature type="transmembrane region" description="Helical" evidence="3">
    <location>
        <begin position="101"/>
        <end position="121"/>
    </location>
</feature>
<feature type="topological domain" description="Cytoplasmic" evidence="3">
    <location>
        <begin position="122"/>
        <end position="137"/>
    </location>
</feature>
<feature type="transmembrane region" description="Helical" evidence="3">
    <location>
        <begin position="138"/>
        <end position="158"/>
    </location>
</feature>
<feature type="topological domain" description="Extracellular" evidence="3">
    <location>
        <begin position="159"/>
        <end position="171"/>
    </location>
</feature>
<feature type="transmembrane region" description="Helical" evidence="3">
    <location>
        <begin position="172"/>
        <end position="194"/>
    </location>
</feature>
<feature type="topological domain" description="Cytoplasmic" evidence="3">
    <location>
        <begin position="195"/>
        <end position="200"/>
    </location>
</feature>
<feature type="transmembrane region" description="Helical" evidence="3">
    <location>
        <begin position="201"/>
        <end position="219"/>
    </location>
</feature>
<feature type="topological domain" description="Extracellular" evidence="3">
    <location>
        <begin position="220"/>
        <end position="265"/>
    </location>
</feature>
<feature type="transmembrane region" description="Helical" evidence="3">
    <location>
        <begin position="266"/>
        <end position="286"/>
    </location>
</feature>
<feature type="topological domain" description="Cytoplasmic" evidence="3">
    <location>
        <begin position="287"/>
        <end position="301"/>
    </location>
</feature>
<feature type="transmembrane region" description="Helical" evidence="3">
    <location>
        <begin position="302"/>
        <end position="322"/>
    </location>
</feature>
<feature type="topological domain" description="Extracellular" evidence="3">
    <location>
        <begin position="323"/>
        <end position="367"/>
    </location>
</feature>
<feature type="transmembrane region" description="Helical" evidence="3">
    <location>
        <begin position="368"/>
        <end position="390"/>
    </location>
</feature>
<feature type="topological domain" description="Cytoplasmic" evidence="3">
    <location>
        <begin position="391"/>
        <end position="410"/>
    </location>
</feature>
<feature type="transmembrane region" description="Helical" evidence="3">
    <location>
        <begin position="411"/>
        <end position="431"/>
    </location>
</feature>
<feature type="topological domain" description="Extracellular" evidence="3">
    <location>
        <begin position="432"/>
        <end position="444"/>
    </location>
</feature>
<feature type="transmembrane region" description="Helical" evidence="3">
    <location>
        <begin position="445"/>
        <end position="465"/>
    </location>
</feature>
<feature type="topological domain" description="Cytoplasmic" evidence="3">
    <location>
        <begin position="466"/>
        <end position="472"/>
    </location>
</feature>
<feature type="transmembrane region" description="Helical" evidence="3">
    <location>
        <begin position="473"/>
        <end position="493"/>
    </location>
</feature>
<feature type="topological domain" description="Extracellular" evidence="3">
    <location>
        <begin position="494"/>
        <end position="514"/>
    </location>
</feature>
<feature type="transmembrane region" description="Helical" evidence="3">
    <location>
        <begin position="515"/>
        <end position="535"/>
    </location>
</feature>
<feature type="topological domain" description="Cytoplasmic" evidence="3">
    <location>
        <begin position="536"/>
        <end position="576"/>
    </location>
</feature>
<feature type="transmembrane region" description="Helical" evidence="3">
    <location>
        <begin position="577"/>
        <end position="597"/>
    </location>
</feature>
<feature type="modified residue" description="Phosphoserine" evidence="2">
    <location>
        <position position="49"/>
    </location>
</feature>
<feature type="glycosylation site" description="N-linked (GlcNAc...) asparagine" evidence="3">
    <location>
        <position position="5"/>
    </location>
</feature>
<sequence>MVADNSTSDPHAPGPQLSVTDIVVITVYFALNVAVGIWSSCRASRNTVSGYFLAGRDMTWWPIGASLFGSSEGSGLFIGLAGSGAAGGLAVAGFDWNATYVLLALAWVFGAIYISSEIVTLAEYIQKRFGGQRIRMYLSVLSLLLSVFTKISLDLYAGALFVHICLGWNFYLSTILTLTITALYTITGGLVAVIYTDALQTLIMVVGAVILAIKAFHQIDGYGQMEAAYARAIPSRTVANTTCHLPRADAMHMFRDPYTGDLPWTGMTFGLTIMATWYWCTDQVIVQRSLSARNLNHAKAGSILASYLKMLPMGLMIMPGMISRALFPDEVGCVVPSECLRACGAEIGCSNIAYPKLVMELMPVGLRGLMIAVMMPALMSSLSSIFNSSSTLFTMDIWRRLRPCASERELLLVGRLVIVVLIGVSVAWIPVLQGSNGGQLFIYMQSVTSSLAPPVTAVFTLGIFWQRANEQGAFWGLLAGLAVGATRLVLEFLHPAPPCGAADTRPAVLSQLHYLHFAVALFVLTGAVAVGGSLLTPPPRRHQIENLTWWTLTRDLSLGAKAGDGQTPQRYTFWARVCGFNAILLMCVNIFFYAYFA</sequence>
<accession>Q28610</accession>
<dbReference type="EMBL" id="U08813">
    <property type="protein sequence ID" value="AAA66065.1"/>
    <property type="molecule type" value="mRNA"/>
</dbReference>
<dbReference type="RefSeq" id="NP_001076168.1">
    <property type="nucleotide sequence ID" value="NM_001082699.2"/>
</dbReference>
<dbReference type="SMR" id="Q28610"/>
<dbReference type="FunCoup" id="Q28610">
    <property type="interactions" value="36"/>
</dbReference>
<dbReference type="STRING" id="9986.ENSOCUP00000030493"/>
<dbReference type="GlyCosmos" id="Q28610">
    <property type="glycosylation" value="1 site, No reported glycans"/>
</dbReference>
<dbReference type="PaxDb" id="9986-ENSOCUP00000013590"/>
<dbReference type="GeneID" id="100009432"/>
<dbReference type="CTD" id="125206"/>
<dbReference type="eggNOG" id="KOG2349">
    <property type="taxonomic scope" value="Eukaryota"/>
</dbReference>
<dbReference type="InParanoid" id="Q28610"/>
<dbReference type="Proteomes" id="UP000001811">
    <property type="component" value="Unplaced"/>
</dbReference>
<dbReference type="GO" id="GO:0016324">
    <property type="term" value="C:apical plasma membrane"/>
    <property type="evidence" value="ECO:0007669"/>
    <property type="project" value="UniProtKB-SubCell"/>
</dbReference>
<dbReference type="GO" id="GO:0005412">
    <property type="term" value="F:D-glucose:sodium symporter activity"/>
    <property type="evidence" value="ECO:0007669"/>
    <property type="project" value="TreeGrafter"/>
</dbReference>
<dbReference type="GO" id="GO:0140930">
    <property type="term" value="F:fructose:sodium symporter activity"/>
    <property type="evidence" value="ECO:0000250"/>
    <property type="project" value="UniProtKB"/>
</dbReference>
<dbReference type="GO" id="GO:0140929">
    <property type="term" value="F:mannose:sodium symporter activity"/>
    <property type="evidence" value="ECO:0000250"/>
    <property type="project" value="UniProtKB"/>
</dbReference>
<dbReference type="FunFam" id="1.20.1730.10:FF:000004">
    <property type="entry name" value="sodium/glucose cotransporter 5 isoform X1"/>
    <property type="match status" value="1"/>
</dbReference>
<dbReference type="Gene3D" id="1.20.1730.10">
    <property type="entry name" value="Sodium/glucose cotransporter"/>
    <property type="match status" value="1"/>
</dbReference>
<dbReference type="InterPro" id="IPR038377">
    <property type="entry name" value="Na/Glc_symporter_sf"/>
</dbReference>
<dbReference type="InterPro" id="IPR001734">
    <property type="entry name" value="Na/solute_symporter"/>
</dbReference>
<dbReference type="InterPro" id="IPR018212">
    <property type="entry name" value="Na/solute_symporter_CS"/>
</dbReference>
<dbReference type="NCBIfam" id="TIGR00813">
    <property type="entry name" value="sss"/>
    <property type="match status" value="1"/>
</dbReference>
<dbReference type="PANTHER" id="PTHR11819:SF128">
    <property type="entry name" value="SODIUM_MANNOSE COTRANSPORTER SLC5A10"/>
    <property type="match status" value="1"/>
</dbReference>
<dbReference type="PANTHER" id="PTHR11819">
    <property type="entry name" value="SOLUTE CARRIER FAMILY 5"/>
    <property type="match status" value="1"/>
</dbReference>
<dbReference type="Pfam" id="PF00474">
    <property type="entry name" value="SSF"/>
    <property type="match status" value="1"/>
</dbReference>
<dbReference type="PROSITE" id="PS00457">
    <property type="entry name" value="NA_SOLUT_SYMP_2"/>
    <property type="match status" value="1"/>
</dbReference>
<dbReference type="PROSITE" id="PS50283">
    <property type="entry name" value="NA_SOLUT_SYMP_3"/>
    <property type="match status" value="1"/>
</dbReference>
<keyword id="KW-1003">Cell membrane</keyword>
<keyword id="KW-0325">Glycoprotein</keyword>
<keyword id="KW-0406">Ion transport</keyword>
<keyword id="KW-0472">Membrane</keyword>
<keyword id="KW-0597">Phosphoprotein</keyword>
<keyword id="KW-1185">Reference proteome</keyword>
<keyword id="KW-0915">Sodium</keyword>
<keyword id="KW-0739">Sodium transport</keyword>
<keyword id="KW-0762">Sugar transport</keyword>
<keyword id="KW-0812">Transmembrane</keyword>
<keyword id="KW-1133">Transmembrane helix</keyword>
<keyword id="KW-0813">Transport</keyword>
<organism>
    <name type="scientific">Oryctolagus cuniculus</name>
    <name type="common">Rabbit</name>
    <dbReference type="NCBI Taxonomy" id="9986"/>
    <lineage>
        <taxon>Eukaryota</taxon>
        <taxon>Metazoa</taxon>
        <taxon>Chordata</taxon>
        <taxon>Craniata</taxon>
        <taxon>Vertebrata</taxon>
        <taxon>Euteleostomi</taxon>
        <taxon>Mammalia</taxon>
        <taxon>Eutheria</taxon>
        <taxon>Euarchontoglires</taxon>
        <taxon>Glires</taxon>
        <taxon>Lagomorpha</taxon>
        <taxon>Leporidae</taxon>
        <taxon>Oryctolagus</taxon>
    </lineage>
</organism>
<protein>
    <recommendedName>
        <fullName evidence="1">Sodium/mannose cotransporter SLC5A10</fullName>
    </recommendedName>
    <alternativeName>
        <fullName>RK-D</fullName>
    </alternativeName>
    <alternativeName>
        <fullName>Sodium/glucose cotransporter 5</fullName>
        <shortName>Na(+)/glucose cotransporter 5</shortName>
    </alternativeName>
    <alternativeName>
        <fullName>Solute carrier family 5 member 10</fullName>
    </alternativeName>
</protein>
<reference key="1">
    <citation type="journal article" date="1994" name="Biochim. Biophys. Acta">
        <title>Sequence of a putative transporter from rabbit kidney related to the Na+/glucose cotransporter gene family.</title>
        <authorList>
            <person name="Pajor A.M."/>
        </authorList>
    </citation>
    <scope>NUCLEOTIDE SEQUENCE [MRNA]</scope>
    <scope>TISSUE SPECIFICITY</scope>
    <source>
        <tissue>Kidney</tissue>
    </source>
</reference>
<name>SC5AA_RABIT</name>
<proteinExistence type="evidence at transcript level"/>
<gene>
    <name type="primary">SLC5A10</name>
    <name type="synonym">SGLT5</name>
</gene>